<gene>
    <name type="primary">rrg9</name>
    <name type="ORF">An02g04480</name>
</gene>
<keyword id="KW-0496">Mitochondrion</keyword>
<keyword id="KW-1185">Reference proteome</keyword>
<keyword id="KW-0809">Transit peptide</keyword>
<reference key="1">
    <citation type="journal article" date="2007" name="Nat. Biotechnol.">
        <title>Genome sequencing and analysis of the versatile cell factory Aspergillus niger CBS 513.88.</title>
        <authorList>
            <person name="Pel H.J."/>
            <person name="de Winde J.H."/>
            <person name="Archer D.B."/>
            <person name="Dyer P.S."/>
            <person name="Hofmann G."/>
            <person name="Schaap P.J."/>
            <person name="Turner G."/>
            <person name="de Vries R.P."/>
            <person name="Albang R."/>
            <person name="Albermann K."/>
            <person name="Andersen M.R."/>
            <person name="Bendtsen J.D."/>
            <person name="Benen J.A.E."/>
            <person name="van den Berg M."/>
            <person name="Breestraat S."/>
            <person name="Caddick M.X."/>
            <person name="Contreras R."/>
            <person name="Cornell M."/>
            <person name="Coutinho P.M."/>
            <person name="Danchin E.G.J."/>
            <person name="Debets A.J.M."/>
            <person name="Dekker P."/>
            <person name="van Dijck P.W.M."/>
            <person name="van Dijk A."/>
            <person name="Dijkhuizen L."/>
            <person name="Driessen A.J.M."/>
            <person name="d'Enfert C."/>
            <person name="Geysens S."/>
            <person name="Goosen C."/>
            <person name="Groot G.S.P."/>
            <person name="de Groot P.W.J."/>
            <person name="Guillemette T."/>
            <person name="Henrissat B."/>
            <person name="Herweijer M."/>
            <person name="van den Hombergh J.P.T.W."/>
            <person name="van den Hondel C.A.M.J.J."/>
            <person name="van der Heijden R.T.J.M."/>
            <person name="van der Kaaij R.M."/>
            <person name="Klis F.M."/>
            <person name="Kools H.J."/>
            <person name="Kubicek C.P."/>
            <person name="van Kuyk P.A."/>
            <person name="Lauber J."/>
            <person name="Lu X."/>
            <person name="van der Maarel M.J.E.C."/>
            <person name="Meulenberg R."/>
            <person name="Menke H."/>
            <person name="Mortimer M.A."/>
            <person name="Nielsen J."/>
            <person name="Oliver S.G."/>
            <person name="Olsthoorn M."/>
            <person name="Pal K."/>
            <person name="van Peij N.N.M.E."/>
            <person name="Ram A.F.J."/>
            <person name="Rinas U."/>
            <person name="Roubos J.A."/>
            <person name="Sagt C.M.J."/>
            <person name="Schmoll M."/>
            <person name="Sun J."/>
            <person name="Ussery D."/>
            <person name="Varga J."/>
            <person name="Vervecken W."/>
            <person name="van de Vondervoort P.J.J."/>
            <person name="Wedler H."/>
            <person name="Woesten H.A.B."/>
            <person name="Zeng A.-P."/>
            <person name="van Ooyen A.J.J."/>
            <person name="Visser J."/>
            <person name="Stam H."/>
        </authorList>
    </citation>
    <scope>NUCLEOTIDE SEQUENCE [LARGE SCALE GENOMIC DNA]</scope>
    <source>
        <strain>ATCC MYA-4892 / CBS 513.88 / FGSC A1513</strain>
    </source>
</reference>
<name>RRG9_ASPNC</name>
<dbReference type="EMBL" id="AM270007">
    <property type="protein sequence ID" value="CAK37587.1"/>
    <property type="molecule type" value="Genomic_DNA"/>
</dbReference>
<dbReference type="RefSeq" id="XP_001399585.1">
    <property type="nucleotide sequence ID" value="XM_001399548.2"/>
</dbReference>
<dbReference type="SMR" id="A2QCR5"/>
<dbReference type="EnsemblFungi" id="CAK37587">
    <property type="protein sequence ID" value="CAK37587"/>
    <property type="gene ID" value="An02g04480"/>
</dbReference>
<dbReference type="GeneID" id="4978936"/>
<dbReference type="KEGG" id="ang:An02g04480"/>
<dbReference type="VEuPathDB" id="FungiDB:An02g04480"/>
<dbReference type="HOGENOM" id="CLU_047598_3_0_1"/>
<dbReference type="Proteomes" id="UP000006706">
    <property type="component" value="Chromosome 4R"/>
</dbReference>
<dbReference type="GO" id="GO:0005739">
    <property type="term" value="C:mitochondrion"/>
    <property type="evidence" value="ECO:0007669"/>
    <property type="project" value="UniProtKB-SubCell"/>
</dbReference>
<dbReference type="GO" id="GO:0005634">
    <property type="term" value="C:nucleus"/>
    <property type="evidence" value="ECO:0007669"/>
    <property type="project" value="TreeGrafter"/>
</dbReference>
<dbReference type="InterPro" id="IPR010487">
    <property type="entry name" value="NGRN/Rrg9"/>
</dbReference>
<dbReference type="PANTHER" id="PTHR13475">
    <property type="entry name" value="NEUGRIN"/>
    <property type="match status" value="1"/>
</dbReference>
<dbReference type="PANTHER" id="PTHR13475:SF3">
    <property type="entry name" value="NEUGRIN"/>
    <property type="match status" value="1"/>
</dbReference>
<dbReference type="Pfam" id="PF06413">
    <property type="entry name" value="Neugrin"/>
    <property type="match status" value="1"/>
</dbReference>
<sequence>MAGVCASSLKLSLPNVLRNALRSEFASDVHQGPASRRILSITPFSQSRYKTQRRNFSASIKPQLCQSAIYLSAQDPSSSASFSSNTAPLGGSENEIRRASTEANASPERNDTKTSHADYLAEAPSSDTPTDKKRTKSSRSKKRSRHEEIPSNPMPQKKPEKWQLHKQALKEKFKDGWNPSKKLSPDALEGIRHLHAVAPEKFTTPVLAEEFKVSPEAIRRILKSKWRPSETEIEDRRKRWERRHDRIWGHLSELGLRPSTKRTRDLTDANQLLYGNNQKKGGKA</sequence>
<organism>
    <name type="scientific">Aspergillus niger (strain ATCC MYA-4892 / CBS 513.88 / FGSC A1513)</name>
    <dbReference type="NCBI Taxonomy" id="425011"/>
    <lineage>
        <taxon>Eukaryota</taxon>
        <taxon>Fungi</taxon>
        <taxon>Dikarya</taxon>
        <taxon>Ascomycota</taxon>
        <taxon>Pezizomycotina</taxon>
        <taxon>Eurotiomycetes</taxon>
        <taxon>Eurotiomycetidae</taxon>
        <taxon>Eurotiales</taxon>
        <taxon>Aspergillaceae</taxon>
        <taxon>Aspergillus</taxon>
        <taxon>Aspergillus subgen. Circumdati</taxon>
    </lineage>
</organism>
<proteinExistence type="inferred from homology"/>
<protein>
    <recommendedName>
        <fullName>Required for respiratory growth protein 9, mitochondrial</fullName>
    </recommendedName>
</protein>
<accession>A2QCR5</accession>
<feature type="transit peptide" description="Mitochondrion" evidence="2">
    <location>
        <begin position="1"/>
        <end status="unknown"/>
    </location>
</feature>
<feature type="chain" id="PRO_0000407940" description="Required for respiratory growth protein 9, mitochondrial">
    <location>
        <begin status="unknown"/>
        <end position="284"/>
    </location>
</feature>
<feature type="region of interest" description="Disordered" evidence="3">
    <location>
        <begin position="76"/>
        <end position="181"/>
    </location>
</feature>
<feature type="region of interest" description="Disordered" evidence="3">
    <location>
        <begin position="259"/>
        <end position="284"/>
    </location>
</feature>
<feature type="compositionally biased region" description="Low complexity" evidence="3">
    <location>
        <begin position="76"/>
        <end position="87"/>
    </location>
</feature>
<feature type="compositionally biased region" description="Basic residues" evidence="3">
    <location>
        <begin position="133"/>
        <end position="144"/>
    </location>
</feature>
<feature type="compositionally biased region" description="Basic and acidic residues" evidence="3">
    <location>
        <begin position="157"/>
        <end position="175"/>
    </location>
</feature>
<feature type="compositionally biased region" description="Polar residues" evidence="3">
    <location>
        <begin position="268"/>
        <end position="284"/>
    </location>
</feature>
<comment type="function">
    <text evidence="1">Required for respiratory activity and maintenance and expression of the mitochondrial genome.</text>
</comment>
<comment type="subcellular location">
    <subcellularLocation>
        <location evidence="1">Mitochondrion</location>
    </subcellularLocation>
</comment>
<comment type="similarity">
    <text evidence="4">Belongs to the RRG9 family.</text>
</comment>
<evidence type="ECO:0000250" key="1"/>
<evidence type="ECO:0000255" key="2"/>
<evidence type="ECO:0000256" key="3">
    <source>
        <dbReference type="SAM" id="MobiDB-lite"/>
    </source>
</evidence>
<evidence type="ECO:0000305" key="4"/>